<feature type="signal peptide" evidence="1">
    <location>
        <begin position="1"/>
        <end position="19"/>
    </location>
</feature>
<feature type="chain" id="PRO_0000012958" description="Taste receptor type 1 member 2">
    <location>
        <begin position="20"/>
        <end position="843"/>
    </location>
</feature>
<feature type="topological domain" description="Extracellular" evidence="1">
    <location>
        <begin position="20"/>
        <end position="570"/>
    </location>
</feature>
<feature type="transmembrane region" description="Helical; Name=1" evidence="1">
    <location>
        <begin position="571"/>
        <end position="591"/>
    </location>
</feature>
<feature type="topological domain" description="Cytoplasmic" evidence="1">
    <location>
        <begin position="592"/>
        <end position="606"/>
    </location>
</feature>
<feature type="transmembrane region" description="Helical; Name=2" evidence="1">
    <location>
        <begin position="607"/>
        <end position="627"/>
    </location>
</feature>
<feature type="topological domain" description="Extracellular" evidence="1">
    <location>
        <begin position="628"/>
        <end position="642"/>
    </location>
</feature>
<feature type="transmembrane region" description="Helical; Name=3" evidence="1">
    <location>
        <begin position="643"/>
        <end position="663"/>
    </location>
</feature>
<feature type="topological domain" description="Cytoplasmic" evidence="1">
    <location>
        <begin position="664"/>
        <end position="682"/>
    </location>
</feature>
<feature type="transmembrane region" description="Helical; Name=4" evidence="1">
    <location>
        <begin position="683"/>
        <end position="703"/>
    </location>
</feature>
<feature type="topological domain" description="Extracellular" evidence="1">
    <location>
        <begin position="704"/>
        <end position="731"/>
    </location>
</feature>
<feature type="transmembrane region" description="Helical; Name=5" evidence="1">
    <location>
        <begin position="732"/>
        <end position="752"/>
    </location>
</feature>
<feature type="topological domain" description="Cytoplasmic" evidence="1">
    <location>
        <begin position="753"/>
        <end position="764"/>
    </location>
</feature>
<feature type="transmembrane region" description="Helical; Name=6" evidence="1">
    <location>
        <begin position="765"/>
        <end position="785"/>
    </location>
</feature>
<feature type="topological domain" description="Extracellular" evidence="1">
    <location>
        <begin position="786"/>
        <end position="789"/>
    </location>
</feature>
<feature type="transmembrane region" description="Helical; Name=7" evidence="1">
    <location>
        <begin position="790"/>
        <end position="810"/>
    </location>
</feature>
<feature type="topological domain" description="Cytoplasmic" evidence="1">
    <location>
        <begin position="811"/>
        <end position="843"/>
    </location>
</feature>
<feature type="glycosylation site" description="N-linked (GlcNAc...) asparagine" evidence="1">
    <location>
        <position position="87"/>
    </location>
</feature>
<feature type="glycosylation site" description="N-linked (GlcNAc...) asparagine" evidence="1">
    <location>
        <position position="296"/>
    </location>
</feature>
<feature type="glycosylation site" description="N-linked (GlcNAc...) asparagine" evidence="1">
    <location>
        <position position="316"/>
    </location>
</feature>
<feature type="glycosylation site" description="N-linked (GlcNAc...) asparagine" evidence="1">
    <location>
        <position position="355"/>
    </location>
</feature>
<feature type="glycosylation site" description="N-linked (GlcNAc...) asparagine" evidence="1">
    <location>
        <position position="372"/>
    </location>
</feature>
<feature type="glycosylation site" description="N-linked (GlcNAc...) asparagine" evidence="1">
    <location>
        <position position="432"/>
    </location>
</feature>
<feature type="glycosylation site" description="N-linked (GlcNAc...) asparagine" evidence="1">
    <location>
        <position position="484"/>
    </location>
</feature>
<feature type="glycosylation site" description="N-linked (GlcNAc...) asparagine" evidence="1">
    <location>
        <position position="491"/>
    </location>
</feature>
<feature type="glycosylation site" description="N-linked (GlcNAc...) asparagine" evidence="1">
    <location>
        <position position="531"/>
    </location>
</feature>
<feature type="sequence variant" description="In strain: DBA/2J." evidence="2">
    <original>E</original>
    <variation>G</variation>
    <location>
        <position position="350"/>
    </location>
</feature>
<feature type="sequence variant" description="In strain: DBA/2J." evidence="2">
    <original>P</original>
    <variation>R</variation>
    <location>
        <position position="352"/>
    </location>
</feature>
<feature type="sequence conflict" description="In Ref. 2; AAK51604." evidence="3" ref="2">
    <original>R</original>
    <variation>Q</variation>
    <location>
        <position position="175"/>
    </location>
</feature>
<feature type="sequence conflict" description="In Ref. 2; AAK51604." evidence="3" ref="2">
    <original>G</original>
    <variation>D</variation>
    <location>
        <position position="527"/>
    </location>
</feature>
<feature type="sequence conflict" description="In Ref. 3." evidence="3" ref="3">
    <original>A</original>
    <variation>V</variation>
    <location>
        <position position="695"/>
    </location>
</feature>
<feature type="sequence conflict" description="In Ref. 3." evidence="3" ref="3">
    <original>M</original>
    <variation>T</variation>
    <location>
        <position position="701"/>
    </location>
</feature>
<evidence type="ECO:0000255" key="1"/>
<evidence type="ECO:0000269" key="2">
    <source>
    </source>
</evidence>
<evidence type="ECO:0000305" key="3"/>
<comment type="function">
    <text>Putative taste receptor. TAS1R2/TAS1R3 recognizes diverse natural and synthetic sweeteners.</text>
</comment>
<comment type="subunit">
    <text>Forms heterodimers with TAS1R3.</text>
</comment>
<comment type="subcellular location">
    <subcellularLocation>
        <location>Cell membrane</location>
        <topology>Multi-pass membrane protein</topology>
    </subcellularLocation>
</comment>
<comment type="tissue specificity">
    <text evidence="2">Expressed mainly in circumvallate and foliate taste papillae.</text>
</comment>
<comment type="similarity">
    <text evidence="3">Belongs to the G-protein coupled receptor 3 family. TAS1R subfamily.</text>
</comment>
<reference key="1">
    <citation type="journal article" date="2001" name="Nat. Neurosci.">
        <title>A candidate taste receptor gene near a sweet taste locus.</title>
        <authorList>
            <person name="Montmayeur J.-P."/>
            <person name="Liberles S.D."/>
            <person name="Matsunami H."/>
            <person name="Buck L.B."/>
        </authorList>
    </citation>
    <scope>NUCLEOTIDE SEQUENCE [MRNA]</scope>
    <scope>TISSUE SPECIFICITY</scope>
    <scope>VARIANTS GLY-350 AND ARG-352</scope>
    <source>
        <strain>C57BL/6J</strain>
        <strain>DBA/2J</strain>
    </source>
</reference>
<reference key="2">
    <citation type="journal article" date="2001" name="Cell">
        <title>Mammalian sweet taste receptors.</title>
        <authorList>
            <person name="Nelson G."/>
            <person name="Hoon M.A."/>
            <person name="Chandrashekar J."/>
            <person name="Zhang Y."/>
            <person name="Ryba N.J.P."/>
            <person name="Zuker C.S."/>
        </authorList>
    </citation>
    <scope>NUCLEOTIDE SEQUENCE [MRNA]</scope>
</reference>
<reference key="3">
    <citation type="journal article" date="2003" name="In Vitro Cell. Dev. Biol. Anim.">
        <title>Taste receptor T1R3 is an essential molecule for the cellular recognition of the disaccharide trehalose.</title>
        <authorList>
            <person name="Ariyasu T."/>
            <person name="Matsumoto S."/>
            <person name="Kyono F."/>
            <person name="Hanaya T."/>
            <person name="Arai S."/>
            <person name="Ikeda M."/>
            <person name="Kurimoto M."/>
        </authorList>
    </citation>
    <scope>NUCLEOTIDE SEQUENCE [MRNA]</scope>
    <source>
        <strain>C57BL/6J</strain>
    </source>
</reference>
<reference key="4">
    <citation type="journal article" date="2009" name="PLoS Biol.">
        <title>Lineage-specific biology revealed by a finished genome assembly of the mouse.</title>
        <authorList>
            <person name="Church D.M."/>
            <person name="Goodstadt L."/>
            <person name="Hillier L.W."/>
            <person name="Zody M.C."/>
            <person name="Goldstein S."/>
            <person name="She X."/>
            <person name="Bult C.J."/>
            <person name="Agarwala R."/>
            <person name="Cherry J.L."/>
            <person name="DiCuccio M."/>
            <person name="Hlavina W."/>
            <person name="Kapustin Y."/>
            <person name="Meric P."/>
            <person name="Maglott D."/>
            <person name="Birtle Z."/>
            <person name="Marques A.C."/>
            <person name="Graves T."/>
            <person name="Zhou S."/>
            <person name="Teague B."/>
            <person name="Potamousis K."/>
            <person name="Churas C."/>
            <person name="Place M."/>
            <person name="Herschleb J."/>
            <person name="Runnheim R."/>
            <person name="Forrest D."/>
            <person name="Amos-Landgraf J."/>
            <person name="Schwartz D.C."/>
            <person name="Cheng Z."/>
            <person name="Lindblad-Toh K."/>
            <person name="Eichler E.E."/>
            <person name="Ponting C.P."/>
        </authorList>
    </citation>
    <scope>NUCLEOTIDE SEQUENCE [LARGE SCALE GENOMIC DNA]</scope>
    <source>
        <strain>C57BL/6J</strain>
    </source>
</reference>
<proteinExistence type="evidence at transcript level"/>
<sequence>MGPQARTLHLLFLLLHALPKPVMLVGNSDFHLAGDYLLGGLFTLHANVKSVSHLSYLQVPKCNEYNMKVLGYNLMQAMRFAVEEINNCSSLLPGVLLGYEMVDVCYLSNNIQPGLYFLSQIDDFLPILKDYSQYRPQVVAVIGPDNSESAITVSNILSYFLVPQVTYSAITDKLRDKRRFPAMLRTVPSATHHIEAMVQLMVHFQWNWIVVLVSDDDYGRENSHLLSQRLTNTGDICIAFQEVLPVPEPNQAVRPEEQDQLDNILDKLRRTSARVVVIFSPELSLHNFFREVLRWNFTGFVWIASESWAIDPVLHNLTELRHTGTFLGVTIQRVSIPGFSQFRVRHDKPEYPMPNETSLRTTCNQDCDACMNITESFNNVLMLSGERVVYSVYSAVYAVAHTLHRLLHCNQVRCTKQIVYPWQLLREIWHVNFTLLGNQLFFDEQGDMPMLLDIIQWQWGLSQNPFQSIASYSPTETRLTYISNVSWYTPNNTVPISMCSKSCQPGQMKKPIGLHPCCFECVDCPPGTYLNRSVDEFNCLSCPGSMWSYKNNIACFKRRLAFLEWHEVPTIVVTILAALGFISTLAILLIFWRHFQTPMVRSAGGPMCFLMLVPLLLAFGMVPVYVGPPTVFSCFCRQAFFTVCFSVCLSCITVRSFQIVCVFKMARRLPSAYGFWMRYHGPYVFVAFITAVKVALVAGNMLATTINPIGRTDPDDPNIIILSCHPNYRNGLLFNTSMDLLLSVLGFSFAYVGKELPTNYNEAKFITLSMTFSFTSSISLCTFMSVHDGVLVTIMDLLVTVLNFLAIGLGYFGPKCYMILFYPERNTSAYFNSMIQGYTMRKS</sequence>
<keyword id="KW-1003">Cell membrane</keyword>
<keyword id="KW-0297">G-protein coupled receptor</keyword>
<keyword id="KW-0325">Glycoprotein</keyword>
<keyword id="KW-0472">Membrane</keyword>
<keyword id="KW-0675">Receptor</keyword>
<keyword id="KW-1185">Reference proteome</keyword>
<keyword id="KW-0716">Sensory transduction</keyword>
<keyword id="KW-0732">Signal</keyword>
<keyword id="KW-0919">Taste</keyword>
<keyword id="KW-0807">Transducer</keyword>
<keyword id="KW-0812">Transmembrane</keyword>
<keyword id="KW-1133">Transmembrane helix</keyword>
<dbReference type="EMBL" id="AF337041">
    <property type="protein sequence ID" value="AAK39438.1"/>
    <property type="molecule type" value="mRNA"/>
</dbReference>
<dbReference type="EMBL" id="AY032623">
    <property type="protein sequence ID" value="AAK51604.1"/>
    <property type="molecule type" value="mRNA"/>
</dbReference>
<dbReference type="EMBL" id="AL831790">
    <property type="status" value="NOT_ANNOTATED_CDS"/>
    <property type="molecule type" value="Genomic_DNA"/>
</dbReference>
<dbReference type="CCDS" id="CCDS18849.1"/>
<dbReference type="RefSeq" id="NP_114079.1">
    <property type="nucleotide sequence ID" value="NM_031873.1"/>
</dbReference>
<dbReference type="SMR" id="Q925I4"/>
<dbReference type="CORUM" id="Q925I4"/>
<dbReference type="FunCoup" id="Q925I4">
    <property type="interactions" value="231"/>
</dbReference>
<dbReference type="IntAct" id="Q925I4">
    <property type="interactions" value="1"/>
</dbReference>
<dbReference type="STRING" id="10090.ENSMUSP00000030510"/>
<dbReference type="GlyCosmos" id="Q925I4">
    <property type="glycosylation" value="9 sites, No reported glycans"/>
</dbReference>
<dbReference type="GlyGen" id="Q925I4">
    <property type="glycosylation" value="9 sites"/>
</dbReference>
<dbReference type="PhosphoSitePlus" id="Q925I4"/>
<dbReference type="PaxDb" id="10090-ENSMUSP00000030510"/>
<dbReference type="Antibodypedia" id="14734">
    <property type="antibodies" value="202 antibodies from 30 providers"/>
</dbReference>
<dbReference type="DNASU" id="83770"/>
<dbReference type="Ensembl" id="ENSMUST00000030510.14">
    <property type="protein sequence ID" value="ENSMUSP00000030510.8"/>
    <property type="gene ID" value="ENSMUSG00000028738.15"/>
</dbReference>
<dbReference type="GeneID" id="83770"/>
<dbReference type="KEGG" id="mmu:83770"/>
<dbReference type="UCSC" id="uc008vmr.1">
    <property type="organism name" value="mouse"/>
</dbReference>
<dbReference type="AGR" id="MGI:1933546"/>
<dbReference type="CTD" id="80834"/>
<dbReference type="MGI" id="MGI:1933546">
    <property type="gene designation" value="Tas1r2"/>
</dbReference>
<dbReference type="VEuPathDB" id="HostDB:ENSMUSG00000028738"/>
<dbReference type="eggNOG" id="KOG1056">
    <property type="taxonomic scope" value="Eukaryota"/>
</dbReference>
<dbReference type="GeneTree" id="ENSGT00940000156136"/>
<dbReference type="HOGENOM" id="CLU_005389_5_1_1"/>
<dbReference type="InParanoid" id="Q925I4"/>
<dbReference type="OMA" id="STCLCRQ"/>
<dbReference type="OrthoDB" id="5984008at2759"/>
<dbReference type="PhylomeDB" id="Q925I4"/>
<dbReference type="TreeFam" id="TF331269"/>
<dbReference type="Reactome" id="R-MMU-418594">
    <property type="pathway name" value="G alpha (i) signalling events"/>
</dbReference>
<dbReference type="Reactome" id="R-MMU-420499">
    <property type="pathway name" value="Class C/3 (Metabotropic glutamate/pheromone receptors)"/>
</dbReference>
<dbReference type="Reactome" id="R-MMU-9717207">
    <property type="pathway name" value="Sensory perception of sweet, bitter, and umami (glutamate) taste"/>
</dbReference>
<dbReference type="BioGRID-ORCS" id="83770">
    <property type="hits" value="5 hits in 78 CRISPR screens"/>
</dbReference>
<dbReference type="PRO" id="PR:Q925I4"/>
<dbReference type="Proteomes" id="UP000000589">
    <property type="component" value="Chromosome 4"/>
</dbReference>
<dbReference type="RNAct" id="Q925I4">
    <property type="molecule type" value="protein"/>
</dbReference>
<dbReference type="ExpressionAtlas" id="Q925I4">
    <property type="expression patterns" value="differential"/>
</dbReference>
<dbReference type="GO" id="GO:0005886">
    <property type="term" value="C:plasma membrane"/>
    <property type="evidence" value="ECO:0007669"/>
    <property type="project" value="UniProtKB-SubCell"/>
</dbReference>
<dbReference type="GO" id="GO:0043235">
    <property type="term" value="C:receptor complex"/>
    <property type="evidence" value="ECO:0000266"/>
    <property type="project" value="MGI"/>
</dbReference>
<dbReference type="GO" id="GO:1903767">
    <property type="term" value="C:sweet taste receptor complex"/>
    <property type="evidence" value="ECO:0007669"/>
    <property type="project" value="Ensembl"/>
</dbReference>
<dbReference type="GO" id="GO:0004930">
    <property type="term" value="F:G protein-coupled receptor activity"/>
    <property type="evidence" value="ECO:0007669"/>
    <property type="project" value="UniProtKB-KW"/>
</dbReference>
<dbReference type="GO" id="GO:0033041">
    <property type="term" value="F:sweet taste receptor activity"/>
    <property type="evidence" value="ECO:0000314"/>
    <property type="project" value="CACAO"/>
</dbReference>
<dbReference type="GO" id="GO:0032467">
    <property type="term" value="P:positive regulation of cytokinesis"/>
    <property type="evidence" value="ECO:0007669"/>
    <property type="project" value="Ensembl"/>
</dbReference>
<dbReference type="GO" id="GO:0050916">
    <property type="term" value="P:sensory perception of sweet taste"/>
    <property type="evidence" value="ECO:0000316"/>
    <property type="project" value="MGI"/>
</dbReference>
<dbReference type="FunFam" id="3.40.50.2300:FF:000016">
    <property type="entry name" value="Taste 1 receptor member 2"/>
    <property type="match status" value="1"/>
</dbReference>
<dbReference type="FunFam" id="2.10.50.30:FF:000004">
    <property type="entry name" value="Taste receptor type 1 member 3-like protein"/>
    <property type="match status" value="1"/>
</dbReference>
<dbReference type="Gene3D" id="3.40.50.2300">
    <property type="match status" value="2"/>
</dbReference>
<dbReference type="Gene3D" id="2.10.50.30">
    <property type="entry name" value="GPCR, family 3, nine cysteines domain"/>
    <property type="match status" value="1"/>
</dbReference>
<dbReference type="InterPro" id="IPR001828">
    <property type="entry name" value="ANF_lig-bd_rcpt"/>
</dbReference>
<dbReference type="InterPro" id="IPR000337">
    <property type="entry name" value="GPCR_3"/>
</dbReference>
<dbReference type="InterPro" id="IPR011500">
    <property type="entry name" value="GPCR_3_9-Cys_dom"/>
</dbReference>
<dbReference type="InterPro" id="IPR038550">
    <property type="entry name" value="GPCR_3_9-Cys_sf"/>
</dbReference>
<dbReference type="InterPro" id="IPR017978">
    <property type="entry name" value="GPCR_3_C"/>
</dbReference>
<dbReference type="InterPro" id="IPR000068">
    <property type="entry name" value="GPCR_3_Ca_sens_rcpt-rel"/>
</dbReference>
<dbReference type="InterPro" id="IPR017979">
    <property type="entry name" value="GPCR_3_CS"/>
</dbReference>
<dbReference type="InterPro" id="IPR028082">
    <property type="entry name" value="Peripla_BP_I"/>
</dbReference>
<dbReference type="PANTHER" id="PTHR24061">
    <property type="entry name" value="CALCIUM-SENSING RECEPTOR-RELATED"/>
    <property type="match status" value="1"/>
</dbReference>
<dbReference type="PANTHER" id="PTHR24061:SF517">
    <property type="entry name" value="TASTE RECEPTOR TYPE 1 MEMBER 2"/>
    <property type="match status" value="1"/>
</dbReference>
<dbReference type="Pfam" id="PF00003">
    <property type="entry name" value="7tm_3"/>
    <property type="match status" value="1"/>
</dbReference>
<dbReference type="Pfam" id="PF01094">
    <property type="entry name" value="ANF_receptor"/>
    <property type="match status" value="1"/>
</dbReference>
<dbReference type="Pfam" id="PF07562">
    <property type="entry name" value="NCD3G"/>
    <property type="match status" value="1"/>
</dbReference>
<dbReference type="PRINTS" id="PR00248">
    <property type="entry name" value="GPCRMGR"/>
</dbReference>
<dbReference type="SUPFAM" id="SSF53822">
    <property type="entry name" value="Periplasmic binding protein-like I"/>
    <property type="match status" value="1"/>
</dbReference>
<dbReference type="SUPFAM" id="SSF57586">
    <property type="entry name" value="TNF receptor-like"/>
    <property type="match status" value="1"/>
</dbReference>
<dbReference type="PROSITE" id="PS00980">
    <property type="entry name" value="G_PROTEIN_RECEP_F3_2"/>
    <property type="match status" value="1"/>
</dbReference>
<dbReference type="PROSITE" id="PS50259">
    <property type="entry name" value="G_PROTEIN_RECEP_F3_4"/>
    <property type="match status" value="1"/>
</dbReference>
<gene>
    <name type="primary">Tas1r2</name>
    <name type="synonym">Gpr71</name>
    <name type="synonym">T1r2</name>
    <name type="synonym">Tr2</name>
</gene>
<protein>
    <recommendedName>
        <fullName>Taste receptor type 1 member 2</fullName>
    </recommendedName>
    <alternativeName>
        <fullName>G-protein coupled receptor 71</fullName>
    </alternativeName>
    <alternativeName>
        <fullName>Sweet taste receptor T1R2</fullName>
    </alternativeName>
</protein>
<name>TS1R2_MOUSE</name>
<accession>Q925I4</accession>
<accession>B1AXX0</accession>
<accession>Q923J8</accession>
<organism>
    <name type="scientific">Mus musculus</name>
    <name type="common">Mouse</name>
    <dbReference type="NCBI Taxonomy" id="10090"/>
    <lineage>
        <taxon>Eukaryota</taxon>
        <taxon>Metazoa</taxon>
        <taxon>Chordata</taxon>
        <taxon>Craniata</taxon>
        <taxon>Vertebrata</taxon>
        <taxon>Euteleostomi</taxon>
        <taxon>Mammalia</taxon>
        <taxon>Eutheria</taxon>
        <taxon>Euarchontoglires</taxon>
        <taxon>Glires</taxon>
        <taxon>Rodentia</taxon>
        <taxon>Myomorpha</taxon>
        <taxon>Muroidea</taxon>
        <taxon>Muridae</taxon>
        <taxon>Murinae</taxon>
        <taxon>Mus</taxon>
        <taxon>Mus</taxon>
    </lineage>
</organism>